<name>RS4_BACCR</name>
<comment type="function">
    <text evidence="1">One of the primary rRNA binding proteins, it binds directly to 16S rRNA where it nucleates assembly of the body of the 30S subunit.</text>
</comment>
<comment type="function">
    <text evidence="1">With S5 and S12 plays an important role in translational accuracy.</text>
</comment>
<comment type="subunit">
    <text evidence="1">Part of the 30S ribosomal subunit. Contacts protein S5. The interaction surface between S4 and S5 is involved in control of translational fidelity.</text>
</comment>
<comment type="similarity">
    <text evidence="1">Belongs to the universal ribosomal protein uS4 family.</text>
</comment>
<feature type="chain" id="PRO_0000132332" description="Small ribosomal subunit protein uS4">
    <location>
        <begin position="1"/>
        <end position="200"/>
    </location>
</feature>
<feature type="domain" description="S4 RNA-binding" evidence="1">
    <location>
        <begin position="92"/>
        <end position="152"/>
    </location>
</feature>
<feature type="region of interest" description="Disordered" evidence="2">
    <location>
        <begin position="22"/>
        <end position="42"/>
    </location>
</feature>
<dbReference type="EMBL" id="AE016877">
    <property type="protein sequence ID" value="AAP11562.1"/>
    <property type="molecule type" value="Genomic_DNA"/>
</dbReference>
<dbReference type="RefSeq" id="NP_834361.1">
    <property type="nucleotide sequence ID" value="NC_004722.1"/>
</dbReference>
<dbReference type="RefSeq" id="WP_000135317.1">
    <property type="nucleotide sequence ID" value="NZ_CP138336.1"/>
</dbReference>
<dbReference type="SMR" id="Q817A4"/>
<dbReference type="STRING" id="226900.BC_4655"/>
<dbReference type="MetOSite" id="Q817A4"/>
<dbReference type="KEGG" id="bce:BC4655"/>
<dbReference type="PATRIC" id="fig|226900.8.peg.4819"/>
<dbReference type="HOGENOM" id="CLU_092403_0_1_9"/>
<dbReference type="OrthoDB" id="9803672at2"/>
<dbReference type="Proteomes" id="UP000001417">
    <property type="component" value="Chromosome"/>
</dbReference>
<dbReference type="GO" id="GO:0015935">
    <property type="term" value="C:small ribosomal subunit"/>
    <property type="evidence" value="ECO:0000318"/>
    <property type="project" value="GO_Central"/>
</dbReference>
<dbReference type="GO" id="GO:0019843">
    <property type="term" value="F:rRNA binding"/>
    <property type="evidence" value="ECO:0000318"/>
    <property type="project" value="GO_Central"/>
</dbReference>
<dbReference type="GO" id="GO:0003735">
    <property type="term" value="F:structural constituent of ribosome"/>
    <property type="evidence" value="ECO:0000318"/>
    <property type="project" value="GO_Central"/>
</dbReference>
<dbReference type="GO" id="GO:0042274">
    <property type="term" value="P:ribosomal small subunit biogenesis"/>
    <property type="evidence" value="ECO:0000318"/>
    <property type="project" value="GO_Central"/>
</dbReference>
<dbReference type="GO" id="GO:0006412">
    <property type="term" value="P:translation"/>
    <property type="evidence" value="ECO:0007669"/>
    <property type="project" value="UniProtKB-UniRule"/>
</dbReference>
<dbReference type="CDD" id="cd00165">
    <property type="entry name" value="S4"/>
    <property type="match status" value="1"/>
</dbReference>
<dbReference type="FunFam" id="1.10.1050.10:FF:000001">
    <property type="entry name" value="30S ribosomal protein S4"/>
    <property type="match status" value="1"/>
</dbReference>
<dbReference type="FunFam" id="3.10.290.10:FF:000001">
    <property type="entry name" value="30S ribosomal protein S4"/>
    <property type="match status" value="1"/>
</dbReference>
<dbReference type="Gene3D" id="1.10.1050.10">
    <property type="entry name" value="Ribosomal Protein S4 Delta 41, Chain A, domain 1"/>
    <property type="match status" value="1"/>
</dbReference>
<dbReference type="Gene3D" id="3.10.290.10">
    <property type="entry name" value="RNA-binding S4 domain"/>
    <property type="match status" value="1"/>
</dbReference>
<dbReference type="HAMAP" id="MF_01306_B">
    <property type="entry name" value="Ribosomal_uS4_B"/>
    <property type="match status" value="1"/>
</dbReference>
<dbReference type="InterPro" id="IPR022801">
    <property type="entry name" value="Ribosomal_uS4"/>
</dbReference>
<dbReference type="InterPro" id="IPR005709">
    <property type="entry name" value="Ribosomal_uS4_bac-type"/>
</dbReference>
<dbReference type="InterPro" id="IPR018079">
    <property type="entry name" value="Ribosomal_uS4_CS"/>
</dbReference>
<dbReference type="InterPro" id="IPR001912">
    <property type="entry name" value="Ribosomal_uS4_N"/>
</dbReference>
<dbReference type="InterPro" id="IPR002942">
    <property type="entry name" value="S4_RNA-bd"/>
</dbReference>
<dbReference type="InterPro" id="IPR036986">
    <property type="entry name" value="S4_RNA-bd_sf"/>
</dbReference>
<dbReference type="NCBIfam" id="NF003717">
    <property type="entry name" value="PRK05327.1"/>
    <property type="match status" value="1"/>
</dbReference>
<dbReference type="NCBIfam" id="TIGR01017">
    <property type="entry name" value="rpsD_bact"/>
    <property type="match status" value="1"/>
</dbReference>
<dbReference type="PANTHER" id="PTHR11831">
    <property type="entry name" value="30S 40S RIBOSOMAL PROTEIN"/>
    <property type="match status" value="1"/>
</dbReference>
<dbReference type="PANTHER" id="PTHR11831:SF4">
    <property type="entry name" value="SMALL RIBOSOMAL SUBUNIT PROTEIN US4M"/>
    <property type="match status" value="1"/>
</dbReference>
<dbReference type="Pfam" id="PF00163">
    <property type="entry name" value="Ribosomal_S4"/>
    <property type="match status" value="1"/>
</dbReference>
<dbReference type="Pfam" id="PF01479">
    <property type="entry name" value="S4"/>
    <property type="match status" value="1"/>
</dbReference>
<dbReference type="SMART" id="SM01390">
    <property type="entry name" value="Ribosomal_S4"/>
    <property type="match status" value="1"/>
</dbReference>
<dbReference type="SMART" id="SM00363">
    <property type="entry name" value="S4"/>
    <property type="match status" value="1"/>
</dbReference>
<dbReference type="SUPFAM" id="SSF55174">
    <property type="entry name" value="Alpha-L RNA-binding motif"/>
    <property type="match status" value="1"/>
</dbReference>
<dbReference type="PROSITE" id="PS00632">
    <property type="entry name" value="RIBOSOMAL_S4"/>
    <property type="match status" value="1"/>
</dbReference>
<dbReference type="PROSITE" id="PS50889">
    <property type="entry name" value="S4"/>
    <property type="match status" value="1"/>
</dbReference>
<evidence type="ECO:0000255" key="1">
    <source>
        <dbReference type="HAMAP-Rule" id="MF_01306"/>
    </source>
</evidence>
<evidence type="ECO:0000256" key="2">
    <source>
        <dbReference type="SAM" id="MobiDB-lite"/>
    </source>
</evidence>
<evidence type="ECO:0000305" key="3"/>
<reference key="1">
    <citation type="journal article" date="2003" name="Nature">
        <title>Genome sequence of Bacillus cereus and comparative analysis with Bacillus anthracis.</title>
        <authorList>
            <person name="Ivanova N."/>
            <person name="Sorokin A."/>
            <person name="Anderson I."/>
            <person name="Galleron N."/>
            <person name="Candelon B."/>
            <person name="Kapatral V."/>
            <person name="Bhattacharyya A."/>
            <person name="Reznik G."/>
            <person name="Mikhailova N."/>
            <person name="Lapidus A."/>
            <person name="Chu L."/>
            <person name="Mazur M."/>
            <person name="Goltsman E."/>
            <person name="Larsen N."/>
            <person name="D'Souza M."/>
            <person name="Walunas T."/>
            <person name="Grechkin Y."/>
            <person name="Pusch G."/>
            <person name="Haselkorn R."/>
            <person name="Fonstein M."/>
            <person name="Ehrlich S.D."/>
            <person name="Overbeek R."/>
            <person name="Kyrpides N.C."/>
        </authorList>
    </citation>
    <scope>NUCLEOTIDE SEQUENCE [LARGE SCALE GENOMIC DNA]</scope>
    <source>
        <strain>ATCC 14579 / DSM 31 / CCUG 7414 / JCM 2152 / NBRC 15305 / NCIMB 9373 / NCTC 2599 / NRRL B-3711</strain>
    </source>
</reference>
<organism>
    <name type="scientific">Bacillus cereus (strain ATCC 14579 / DSM 31 / CCUG 7414 / JCM 2152 / NBRC 15305 / NCIMB 9373 / NCTC 2599 / NRRL B-3711)</name>
    <dbReference type="NCBI Taxonomy" id="226900"/>
    <lineage>
        <taxon>Bacteria</taxon>
        <taxon>Bacillati</taxon>
        <taxon>Bacillota</taxon>
        <taxon>Bacilli</taxon>
        <taxon>Bacillales</taxon>
        <taxon>Bacillaceae</taxon>
        <taxon>Bacillus</taxon>
        <taxon>Bacillus cereus group</taxon>
    </lineage>
</organism>
<gene>
    <name evidence="1" type="primary">rpsD</name>
    <name type="ordered locus">BC_4655</name>
</gene>
<accession>Q817A4</accession>
<proteinExistence type="inferred from homology"/>
<sequence>MARYTGPAWKLSRRLGISLSGTGKELEKRPYAPGPHGPNQRKKLSEYGLQLQEKQKLRHMYGMTERQFRRTFDQAGKMPGKHGENFMILLEARLDNLVYRMGLARTRRAARQLVNHGHIMVDGARVDIPSYRVKPGQTISVREKSNSLVVVKEAIEVNNFVPEYLTFDADKLEATYTRHAERSELPAEINEALIVEFYSR</sequence>
<keyword id="KW-1185">Reference proteome</keyword>
<keyword id="KW-0687">Ribonucleoprotein</keyword>
<keyword id="KW-0689">Ribosomal protein</keyword>
<keyword id="KW-0694">RNA-binding</keyword>
<keyword id="KW-0699">rRNA-binding</keyword>
<protein>
    <recommendedName>
        <fullName evidence="1">Small ribosomal subunit protein uS4</fullName>
    </recommendedName>
    <alternativeName>
        <fullName evidence="3">30S ribosomal protein S4</fullName>
    </alternativeName>
</protein>